<keyword id="KW-0075">B-cell activation</keyword>
<keyword id="KW-0963">Cytoplasm</keyword>
<keyword id="KW-0597">Phosphoprotein</keyword>
<keyword id="KW-1185">Reference proteome</keyword>
<keyword id="KW-0728">SH3 domain</keyword>
<proteinExistence type="evidence at transcript level"/>
<evidence type="ECO:0000250" key="1"/>
<evidence type="ECO:0000250" key="2">
    <source>
        <dbReference type="UniProtKB" id="O75563"/>
    </source>
</evidence>
<evidence type="ECO:0000250" key="3">
    <source>
        <dbReference type="UniProtKB" id="Q3UND0"/>
    </source>
</evidence>
<evidence type="ECO:0000250" key="4">
    <source>
        <dbReference type="UniProtKB" id="Q920G0"/>
    </source>
</evidence>
<evidence type="ECO:0000255" key="5">
    <source>
        <dbReference type="PROSITE-ProRule" id="PRU00145"/>
    </source>
</evidence>
<evidence type="ECO:0000255" key="6">
    <source>
        <dbReference type="PROSITE-ProRule" id="PRU00192"/>
    </source>
</evidence>
<evidence type="ECO:0000256" key="7">
    <source>
        <dbReference type="SAM" id="MobiDB-lite"/>
    </source>
</evidence>
<evidence type="ECO:0000305" key="8"/>
<feature type="chain" id="PRO_0000270178" description="Src kinase-associated phosphoprotein 2">
    <location>
        <begin position="1"/>
        <end position="358"/>
    </location>
</feature>
<feature type="domain" description="PH" evidence="5">
    <location>
        <begin position="116"/>
        <end position="219"/>
    </location>
</feature>
<feature type="domain" description="SH3" evidence="6">
    <location>
        <begin position="296"/>
        <end position="357"/>
    </location>
</feature>
<feature type="region of interest" description="Disordered" evidence="7">
    <location>
        <begin position="62"/>
        <end position="88"/>
    </location>
</feature>
<feature type="region of interest" description="Disordered" evidence="7">
    <location>
        <begin position="232"/>
        <end position="254"/>
    </location>
</feature>
<feature type="compositionally biased region" description="Low complexity" evidence="7">
    <location>
        <begin position="243"/>
        <end position="253"/>
    </location>
</feature>
<feature type="modified residue" description="Phosphoserine" evidence="2">
    <location>
        <position position="5"/>
    </location>
</feature>
<feature type="modified residue" description="Phosphoserine" evidence="2">
    <location>
        <position position="6"/>
    </location>
</feature>
<feature type="modified residue" description="Phosphotyrosine" evidence="2">
    <location>
        <position position="75"/>
    </location>
</feature>
<feature type="modified residue" description="Phosphoserine" evidence="4">
    <location>
        <position position="87"/>
    </location>
</feature>
<feature type="modified residue" description="Phosphoserine" evidence="4">
    <location>
        <position position="90"/>
    </location>
</feature>
<feature type="modified residue" description="Phosphotyrosine" evidence="3">
    <location>
        <position position="151"/>
    </location>
</feature>
<feature type="modified residue" description="Phosphotyrosine" evidence="2">
    <location>
        <position position="197"/>
    </location>
</feature>
<feature type="modified residue" description="Phosphoserine" evidence="4">
    <location>
        <position position="223"/>
    </location>
</feature>
<feature type="modified residue" description="Phosphotyrosine" evidence="3">
    <location>
        <position position="260"/>
    </location>
</feature>
<feature type="modified residue" description="Phosphoserine" evidence="4">
    <location>
        <position position="282"/>
    </location>
</feature>
<feature type="modified residue" description="Phosphoserine" evidence="4">
    <location>
        <position position="285"/>
    </location>
</feature>
<gene>
    <name type="primary">SKAP2</name>
    <name type="synonym">SCAP2</name>
</gene>
<comment type="function">
    <text evidence="1">May be involved in B-cell and macrophage adhesion processes. In B-cells, may act by coupling the B-cell receptor (BCR) to integrin activation. May play a role in src signaling pathway (By similarity).</text>
</comment>
<comment type="subunit">
    <text evidence="1">Interacts with FYB1, which is required for SKAP2 protein stability. Interacts with PTPNS1. Part of a complex consisting of SKAP2, FYB1 and PTPNS1. Part of a complex consisting of SKAP2, FYB1 and LILRB3. Interacts with LAT, GRB2, PTK2B and PRAM1. May interact with actin. May interact with FYN, HCK and LYN. Interacts with FASLG (By similarity).</text>
</comment>
<comment type="subcellular location">
    <subcellularLocation>
        <location evidence="1">Cytoplasm</location>
    </subcellularLocation>
</comment>
<comment type="domain">
    <text evidence="1">The SH3 domain interacts with FYB1 and PTK2B.</text>
</comment>
<comment type="similarity">
    <text evidence="8">Belongs to the SKAP family.</text>
</comment>
<name>SKAP2_BOVIN</name>
<protein>
    <recommendedName>
        <fullName>Src kinase-associated phosphoprotein 2</fullName>
    </recommendedName>
    <alternativeName>
        <fullName>Src family-associated phosphoprotein 2</fullName>
    </alternativeName>
</protein>
<reference key="1">
    <citation type="submission" date="2005-11" db="EMBL/GenBank/DDBJ databases">
        <authorList>
            <consortium name="NIH - Mammalian Gene Collection (MGC) project"/>
        </authorList>
    </citation>
    <scope>NUCLEOTIDE SEQUENCE [LARGE SCALE MRNA]</scope>
    <source>
        <strain>Hereford</strain>
        <tissue>Heart ventricle</tissue>
    </source>
</reference>
<organism>
    <name type="scientific">Bos taurus</name>
    <name type="common">Bovine</name>
    <dbReference type="NCBI Taxonomy" id="9913"/>
    <lineage>
        <taxon>Eukaryota</taxon>
        <taxon>Metazoa</taxon>
        <taxon>Chordata</taxon>
        <taxon>Craniata</taxon>
        <taxon>Vertebrata</taxon>
        <taxon>Euteleostomi</taxon>
        <taxon>Mammalia</taxon>
        <taxon>Eutheria</taxon>
        <taxon>Laurasiatheria</taxon>
        <taxon>Artiodactyla</taxon>
        <taxon>Ruminantia</taxon>
        <taxon>Pecora</taxon>
        <taxon>Bovidae</taxon>
        <taxon>Bovinae</taxon>
        <taxon>Bos</taxon>
    </lineage>
</organism>
<accession>Q32LP7</accession>
<dbReference type="EMBL" id="BC109480">
    <property type="protein sequence ID" value="AAI09481.1"/>
    <property type="molecule type" value="mRNA"/>
</dbReference>
<dbReference type="RefSeq" id="NP_001033303.1">
    <property type="nucleotide sequence ID" value="NM_001038214.1"/>
</dbReference>
<dbReference type="SMR" id="Q32LP7"/>
<dbReference type="FunCoup" id="Q32LP7">
    <property type="interactions" value="762"/>
</dbReference>
<dbReference type="STRING" id="9913.ENSBTAP00000043366"/>
<dbReference type="PaxDb" id="9913-ENSBTAP00000043366"/>
<dbReference type="Ensembl" id="ENSBTAT00000046037.3">
    <property type="protein sequence ID" value="ENSBTAP00000043366.2"/>
    <property type="gene ID" value="ENSBTAG00000005650.7"/>
</dbReference>
<dbReference type="GeneID" id="616545"/>
<dbReference type="KEGG" id="bta:616545"/>
<dbReference type="CTD" id="8935"/>
<dbReference type="VEuPathDB" id="HostDB:ENSBTAG00000005650"/>
<dbReference type="VGNC" id="VGNC:34646">
    <property type="gene designation" value="SKAP2"/>
</dbReference>
<dbReference type="eggNOG" id="ENOG502QVFD">
    <property type="taxonomic scope" value="Eukaryota"/>
</dbReference>
<dbReference type="GeneTree" id="ENSGT00390000017856"/>
<dbReference type="HOGENOM" id="CLU_062032_0_0_1"/>
<dbReference type="InParanoid" id="Q32LP7"/>
<dbReference type="OMA" id="ASDRCDK"/>
<dbReference type="OrthoDB" id="243840at2759"/>
<dbReference type="TreeFam" id="TF331055"/>
<dbReference type="Reactome" id="R-BTA-391160">
    <property type="pathway name" value="Signal regulatory protein family interactions"/>
</dbReference>
<dbReference type="Proteomes" id="UP000009136">
    <property type="component" value="Chromosome 4"/>
</dbReference>
<dbReference type="Bgee" id="ENSBTAG00000005650">
    <property type="expression patterns" value="Expressed in monocyte and 104 other cell types or tissues"/>
</dbReference>
<dbReference type="GO" id="GO:0005737">
    <property type="term" value="C:cytoplasm"/>
    <property type="evidence" value="ECO:0000318"/>
    <property type="project" value="GO_Central"/>
</dbReference>
<dbReference type="GO" id="GO:0005829">
    <property type="term" value="C:cytosol"/>
    <property type="evidence" value="ECO:0007669"/>
    <property type="project" value="Ensembl"/>
</dbReference>
<dbReference type="GO" id="GO:0005654">
    <property type="term" value="C:nucleoplasm"/>
    <property type="evidence" value="ECO:0007669"/>
    <property type="project" value="Ensembl"/>
</dbReference>
<dbReference type="GO" id="GO:0005886">
    <property type="term" value="C:plasma membrane"/>
    <property type="evidence" value="ECO:0000318"/>
    <property type="project" value="GO_Central"/>
</dbReference>
<dbReference type="GO" id="GO:0042113">
    <property type="term" value="P:B cell activation"/>
    <property type="evidence" value="ECO:0007669"/>
    <property type="project" value="UniProtKB-KW"/>
</dbReference>
<dbReference type="GO" id="GO:0008285">
    <property type="term" value="P:negative regulation of cell population proliferation"/>
    <property type="evidence" value="ECO:0007669"/>
    <property type="project" value="Ensembl"/>
</dbReference>
<dbReference type="CDD" id="cd13381">
    <property type="entry name" value="PH_Skap-hom_Skap2"/>
    <property type="match status" value="1"/>
</dbReference>
<dbReference type="FunFam" id="2.30.29.30:FF:000194">
    <property type="entry name" value="Putative src kinase-associated phosphoprotein 2"/>
    <property type="match status" value="1"/>
</dbReference>
<dbReference type="FunFam" id="2.30.30.40:FF:000097">
    <property type="entry name" value="Putative src kinase-associated phosphoprotein 2"/>
    <property type="match status" value="1"/>
</dbReference>
<dbReference type="Gene3D" id="6.10.250.220">
    <property type="match status" value="1"/>
</dbReference>
<dbReference type="Gene3D" id="2.30.29.30">
    <property type="entry name" value="Pleckstrin-homology domain (PH domain)/Phosphotyrosine-binding domain (PTB)"/>
    <property type="match status" value="1"/>
</dbReference>
<dbReference type="Gene3D" id="2.30.30.40">
    <property type="entry name" value="SH3 Domains"/>
    <property type="match status" value="1"/>
</dbReference>
<dbReference type="InterPro" id="IPR011993">
    <property type="entry name" value="PH-like_dom_sf"/>
</dbReference>
<dbReference type="InterPro" id="IPR001849">
    <property type="entry name" value="PH_domain"/>
</dbReference>
<dbReference type="InterPro" id="IPR036028">
    <property type="entry name" value="SH3-like_dom_sf"/>
</dbReference>
<dbReference type="InterPro" id="IPR001452">
    <property type="entry name" value="SH3_domain"/>
</dbReference>
<dbReference type="InterPro" id="IPR037781">
    <property type="entry name" value="SKAP_fam"/>
</dbReference>
<dbReference type="PANTHER" id="PTHR15129:SF2">
    <property type="entry name" value="SRC KINASE-ASSOCIATED PHOSPHOPROTEIN 2"/>
    <property type="match status" value="1"/>
</dbReference>
<dbReference type="PANTHER" id="PTHR15129">
    <property type="entry name" value="SRC-ASSOCIATED ADAPTOR PROTEIN"/>
    <property type="match status" value="1"/>
</dbReference>
<dbReference type="Pfam" id="PF00169">
    <property type="entry name" value="PH"/>
    <property type="match status" value="1"/>
</dbReference>
<dbReference type="Pfam" id="PF00018">
    <property type="entry name" value="SH3_1"/>
    <property type="match status" value="1"/>
</dbReference>
<dbReference type="PRINTS" id="PR00452">
    <property type="entry name" value="SH3DOMAIN"/>
</dbReference>
<dbReference type="SMART" id="SM00233">
    <property type="entry name" value="PH"/>
    <property type="match status" value="1"/>
</dbReference>
<dbReference type="SMART" id="SM00326">
    <property type="entry name" value="SH3"/>
    <property type="match status" value="1"/>
</dbReference>
<dbReference type="SUPFAM" id="SSF50729">
    <property type="entry name" value="PH domain-like"/>
    <property type="match status" value="1"/>
</dbReference>
<dbReference type="SUPFAM" id="SSF50044">
    <property type="entry name" value="SH3-domain"/>
    <property type="match status" value="1"/>
</dbReference>
<dbReference type="PROSITE" id="PS50003">
    <property type="entry name" value="PH_DOMAIN"/>
    <property type="match status" value="1"/>
</dbReference>
<dbReference type="PROSITE" id="PS50002">
    <property type="entry name" value="SH3"/>
    <property type="match status" value="1"/>
</dbReference>
<sequence length="358" mass="40839">MPNPSSISAPYPLPEEIRNLLADVETFVADILRGENLSKKAKEKRDALVKKIKDVKSIYLQESQDKGDAEDGEEYDDPFAGPPDTISLASERYDKDDEAPSDGNQFPPIAAQDLPFVLKAGYLEKRRKDHSFLGFEWQKRWCALSKTVFYYYGSDKDKQQKGEFAIDGYNVRMNNTLRKDGKKDCCFEISAPDKRIYQFTAASPKDAEEWVQQLNFVLQDMGSDVIPEDDEERGELYDDVDHPLPSSSPTRSLPIDDEIYEELPEEEEDGALVKVEGQRKMSQDSVHHTTGDKSTNYANFYQGLWDCTGALSDELSFKRGDVIYILSKEYNRYGWWVGEMKGAIGLVPKAYVMEMYDI</sequence>